<gene>
    <name type="primary">KDSA1</name>
    <name type="ordered locus">At1g79500</name>
    <name type="ORF">T8K14.8</name>
</gene>
<accession>Q9AV97</accession>
<accession>B9DG45</accession>
<accession>Q8L890</accession>
<accession>Q9SAJ9</accession>
<proteinExistence type="evidence at protein level"/>
<dbReference type="EC" id="2.5.1.55" evidence="2 3"/>
<dbReference type="EMBL" id="AB059683">
    <property type="protein sequence ID" value="BAB41014.1"/>
    <property type="molecule type" value="mRNA"/>
</dbReference>
<dbReference type="EMBL" id="AC007202">
    <property type="protein sequence ID" value="AAD30227.1"/>
    <property type="molecule type" value="Genomic_DNA"/>
</dbReference>
<dbReference type="EMBL" id="CP002684">
    <property type="protein sequence ID" value="AEE36251.1"/>
    <property type="molecule type" value="Genomic_DNA"/>
</dbReference>
<dbReference type="EMBL" id="CP002684">
    <property type="protein sequence ID" value="AEE36252.1"/>
    <property type="molecule type" value="Genomic_DNA"/>
</dbReference>
<dbReference type="EMBL" id="CP002684">
    <property type="protein sequence ID" value="AEE36253.1"/>
    <property type="molecule type" value="Genomic_DNA"/>
</dbReference>
<dbReference type="EMBL" id="CP002684">
    <property type="protein sequence ID" value="AEE36254.1"/>
    <property type="molecule type" value="Genomic_DNA"/>
</dbReference>
<dbReference type="EMBL" id="AF372947">
    <property type="protein sequence ID" value="AAK50087.1"/>
    <property type="molecule type" value="mRNA"/>
</dbReference>
<dbReference type="EMBL" id="AY113162">
    <property type="protein sequence ID" value="AAM47465.1"/>
    <property type="molecule type" value="mRNA"/>
</dbReference>
<dbReference type="EMBL" id="AK317018">
    <property type="protein sequence ID" value="BAH19712.1"/>
    <property type="molecule type" value="mRNA"/>
</dbReference>
<dbReference type="PIR" id="C96826">
    <property type="entry name" value="C96826"/>
</dbReference>
<dbReference type="RefSeq" id="NP_001319413.1">
    <molecule id="Q9AV97-1"/>
    <property type="nucleotide sequence ID" value="NM_001334882.1"/>
</dbReference>
<dbReference type="RefSeq" id="NP_001319414.1">
    <molecule id="Q9AV97-1"/>
    <property type="nucleotide sequence ID" value="NM_001334883.1"/>
</dbReference>
<dbReference type="RefSeq" id="NP_001319415.1">
    <molecule id="Q9AV97-1"/>
    <property type="nucleotide sequence ID" value="NM_001334884.1"/>
</dbReference>
<dbReference type="RefSeq" id="NP_178068.1">
    <molecule id="Q9AV97-1"/>
    <property type="nucleotide sequence ID" value="NM_106598.4"/>
</dbReference>
<dbReference type="SMR" id="Q9AV97"/>
<dbReference type="BioGRID" id="29507">
    <property type="interactions" value="2"/>
</dbReference>
<dbReference type="FunCoup" id="Q9AV97">
    <property type="interactions" value="146"/>
</dbReference>
<dbReference type="STRING" id="3702.Q9AV97"/>
<dbReference type="iPTMnet" id="Q9AV97"/>
<dbReference type="ProteomicsDB" id="250667">
    <molecule id="Q9AV97-1"/>
</dbReference>
<dbReference type="EnsemblPlants" id="AT1G79500.1">
    <molecule id="Q9AV97-1"/>
    <property type="protein sequence ID" value="AT1G79500.1"/>
    <property type="gene ID" value="AT1G79500"/>
</dbReference>
<dbReference type="EnsemblPlants" id="AT1G79500.2">
    <molecule id="Q9AV97-1"/>
    <property type="protein sequence ID" value="AT1G79500.2"/>
    <property type="gene ID" value="AT1G79500"/>
</dbReference>
<dbReference type="EnsemblPlants" id="AT1G79500.3">
    <molecule id="Q9AV97-1"/>
    <property type="protein sequence ID" value="AT1G79500.3"/>
    <property type="gene ID" value="AT1G79500"/>
</dbReference>
<dbReference type="EnsemblPlants" id="AT1G79500.4">
    <molecule id="Q9AV97-1"/>
    <property type="protein sequence ID" value="AT1G79500.4"/>
    <property type="gene ID" value="AT1G79500"/>
</dbReference>
<dbReference type="GeneID" id="844288"/>
<dbReference type="Gramene" id="AT1G79500.1">
    <molecule id="Q9AV97-1"/>
    <property type="protein sequence ID" value="AT1G79500.1"/>
    <property type="gene ID" value="AT1G79500"/>
</dbReference>
<dbReference type="Gramene" id="AT1G79500.2">
    <molecule id="Q9AV97-1"/>
    <property type="protein sequence ID" value="AT1G79500.2"/>
    <property type="gene ID" value="AT1G79500"/>
</dbReference>
<dbReference type="Gramene" id="AT1G79500.3">
    <molecule id="Q9AV97-1"/>
    <property type="protein sequence ID" value="AT1G79500.3"/>
    <property type="gene ID" value="AT1G79500"/>
</dbReference>
<dbReference type="Gramene" id="AT1G79500.4">
    <molecule id="Q9AV97-1"/>
    <property type="protein sequence ID" value="AT1G79500.4"/>
    <property type="gene ID" value="AT1G79500"/>
</dbReference>
<dbReference type="KEGG" id="ath:AT1G79500"/>
<dbReference type="Araport" id="AT1G79500"/>
<dbReference type="TAIR" id="AT1G79500">
    <property type="gene designation" value="ATKDSA1"/>
</dbReference>
<dbReference type="HOGENOM" id="CLU_036666_0_0_1"/>
<dbReference type="InParanoid" id="Q9AV97"/>
<dbReference type="OMA" id="FGYHNLV"/>
<dbReference type="PhylomeDB" id="Q9AV97"/>
<dbReference type="BioCyc" id="ARA:AT1G79500-MONOMER"/>
<dbReference type="BioCyc" id="MetaCyc:AT1G79500-MONOMER"/>
<dbReference type="BRENDA" id="2.5.1.55">
    <property type="organism ID" value="399"/>
</dbReference>
<dbReference type="PRO" id="PR:Q9AV97"/>
<dbReference type="Proteomes" id="UP000006548">
    <property type="component" value="Chromosome 1"/>
</dbReference>
<dbReference type="ExpressionAtlas" id="Q9AV97">
    <property type="expression patterns" value="baseline and differential"/>
</dbReference>
<dbReference type="GO" id="GO:0005737">
    <property type="term" value="C:cytoplasm"/>
    <property type="evidence" value="ECO:0007669"/>
    <property type="project" value="UniProtKB-SubCell"/>
</dbReference>
<dbReference type="GO" id="GO:0008676">
    <property type="term" value="F:3-deoxy-8-phosphooctulonate synthase activity"/>
    <property type="evidence" value="ECO:0000314"/>
    <property type="project" value="UniProtKB"/>
</dbReference>
<dbReference type="GO" id="GO:0046364">
    <property type="term" value="P:monosaccharide biosynthetic process"/>
    <property type="evidence" value="ECO:0000314"/>
    <property type="project" value="UniProtKB"/>
</dbReference>
<dbReference type="GO" id="GO:0048868">
    <property type="term" value="P:pollen tube development"/>
    <property type="evidence" value="ECO:0000315"/>
    <property type="project" value="UniProtKB"/>
</dbReference>
<dbReference type="GO" id="GO:0009860">
    <property type="term" value="P:pollen tube growth"/>
    <property type="evidence" value="ECO:0000315"/>
    <property type="project" value="UniProtKB"/>
</dbReference>
<dbReference type="GO" id="GO:0010306">
    <property type="term" value="P:rhamnogalacturonan II biosynthetic process"/>
    <property type="evidence" value="ECO:0000304"/>
    <property type="project" value="UniProtKB"/>
</dbReference>
<dbReference type="FunFam" id="3.20.20.70:FF:000254">
    <property type="entry name" value="2-dehydro-3-deoxyphosphooctonate aldolase 2"/>
    <property type="match status" value="1"/>
</dbReference>
<dbReference type="Gene3D" id="3.20.20.70">
    <property type="entry name" value="Aldolase class I"/>
    <property type="match status" value="1"/>
</dbReference>
<dbReference type="HAMAP" id="MF_00056">
    <property type="entry name" value="KDO8P_synth"/>
    <property type="match status" value="1"/>
</dbReference>
<dbReference type="InterPro" id="IPR013785">
    <property type="entry name" value="Aldolase_TIM"/>
</dbReference>
<dbReference type="InterPro" id="IPR006218">
    <property type="entry name" value="DAHP1/KDSA"/>
</dbReference>
<dbReference type="InterPro" id="IPR006269">
    <property type="entry name" value="KDO8P_synthase"/>
</dbReference>
<dbReference type="NCBIfam" id="TIGR01362">
    <property type="entry name" value="KDO8P_synth"/>
    <property type="match status" value="1"/>
</dbReference>
<dbReference type="NCBIfam" id="NF003543">
    <property type="entry name" value="PRK05198.1"/>
    <property type="match status" value="1"/>
</dbReference>
<dbReference type="PANTHER" id="PTHR21057">
    <property type="entry name" value="PHOSPHO-2-DEHYDRO-3-DEOXYHEPTONATE ALDOLASE"/>
    <property type="match status" value="1"/>
</dbReference>
<dbReference type="Pfam" id="PF00793">
    <property type="entry name" value="DAHP_synth_1"/>
    <property type="match status" value="1"/>
</dbReference>
<dbReference type="SUPFAM" id="SSF51569">
    <property type="entry name" value="Aldolase"/>
    <property type="match status" value="1"/>
</dbReference>
<sequence length="290" mass="31657">MAATSLLYNQLKAAEPFFLLAGPNVIESEEHILRMAKHIKDISTKVGLPLVFKSSFDKANRTSSKSFRGPGMAEGLKILEKVKVAYDLPIVTDVHESSQCEAVGKVADIIQIPAFLCRQTDLLVAAAQTGKIINIKKGQFCAPSVMENSAEKIRLAGNPNVMVCERGTMFGYNDLIVDPRNFEWMREANCPVVADITHSLQQPAGKKLDGGGVASGGLRELIPCIARTAVAVGVDGIFMEVHDDPLSAPVDGPTQWPLRHLEELLEELIAIARVTKGKQRLQIDLTPYRD</sequence>
<organism>
    <name type="scientific">Arabidopsis thaliana</name>
    <name type="common">Mouse-ear cress</name>
    <dbReference type="NCBI Taxonomy" id="3702"/>
    <lineage>
        <taxon>Eukaryota</taxon>
        <taxon>Viridiplantae</taxon>
        <taxon>Streptophyta</taxon>
        <taxon>Embryophyta</taxon>
        <taxon>Tracheophyta</taxon>
        <taxon>Spermatophyta</taxon>
        <taxon>Magnoliopsida</taxon>
        <taxon>eudicotyledons</taxon>
        <taxon>Gunneridae</taxon>
        <taxon>Pentapetalae</taxon>
        <taxon>rosids</taxon>
        <taxon>malvids</taxon>
        <taxon>Brassicales</taxon>
        <taxon>Brassicaceae</taxon>
        <taxon>Camelineae</taxon>
        <taxon>Arabidopsis</taxon>
    </lineage>
</organism>
<keyword id="KW-0007">Acetylation</keyword>
<keyword id="KW-0025">Alternative splicing</keyword>
<keyword id="KW-0961">Cell wall biogenesis/degradation</keyword>
<keyword id="KW-0963">Cytoplasm</keyword>
<keyword id="KW-1185">Reference proteome</keyword>
<keyword id="KW-0808">Transferase</keyword>
<comment type="function">
    <text evidence="2 3 4">Catalyzes the stereospecific condensation of D-arabinose 5-phosphate and phosphoenolpyruvate to form 3-deoxy-D-manno-octulosonate 8-phosphate (KDO-8-phosphate) and inorganic phosphate. Involved in the biosynthesis of 3-deoxy-D-manno-octulosonate (KDO) which is an indispensable component of rhamnogalacturonan II (RG-II), a structurally complex pectic polysaccharide of the primary cell wall. RG-II is essential for the cell wall integrity of rapidly growing tissues and pollen tube growth and elongation.</text>
</comment>
<comment type="catalytic activity">
    <reaction evidence="2 3">
        <text>D-arabinose 5-phosphate + phosphoenolpyruvate + H2O = 3-deoxy-alpha-D-manno-2-octulosonate-8-phosphate + phosphate</text>
        <dbReference type="Rhea" id="RHEA:14053"/>
        <dbReference type="ChEBI" id="CHEBI:15377"/>
        <dbReference type="ChEBI" id="CHEBI:43474"/>
        <dbReference type="ChEBI" id="CHEBI:57693"/>
        <dbReference type="ChEBI" id="CHEBI:58702"/>
        <dbReference type="ChEBI" id="CHEBI:85985"/>
        <dbReference type="EC" id="2.5.1.55"/>
    </reaction>
</comment>
<comment type="biophysicochemical properties">
    <kinetics>
        <KM evidence="3">3.6 uM for phosphoenolpyruvate</KM>
        <KM evidence="3">3.8 uM for D-arabinose 5-phosphate</KM>
    </kinetics>
    <phDependence>
        <text evidence="3">Optimum pH is 6.5-9.5.</text>
    </phDependence>
    <temperatureDependence>
        <text evidence="3">Optimum temperature is 65 degrees Celsius.</text>
    </temperatureDependence>
</comment>
<comment type="subcellular location">
    <subcellularLocation>
        <location evidence="1">Cytoplasm</location>
    </subcellularLocation>
</comment>
<comment type="alternative products">
    <event type="alternative splicing"/>
    <isoform>
        <id>Q9AV97-1</id>
        <name>1</name>
        <sequence type="displayed"/>
    </isoform>
    <text>A number of isoforms are produced. According to EST sequences.</text>
</comment>
<comment type="tissue specificity">
    <text evidence="2">Expressed in shoots.</text>
</comment>
<comment type="similarity">
    <text evidence="5">Belongs to the KdsA family.</text>
</comment>
<name>KDSA1_ARATH</name>
<evidence type="ECO:0000250" key="1"/>
<evidence type="ECO:0000269" key="2">
    <source>
    </source>
</evidence>
<evidence type="ECO:0000269" key="3">
    <source>
    </source>
</evidence>
<evidence type="ECO:0000269" key="4">
    <source>
    </source>
</evidence>
<evidence type="ECO:0000305" key="5"/>
<evidence type="ECO:0007744" key="6">
    <source>
    </source>
</evidence>
<reference key="1">
    <citation type="journal article" date="2003" name="J. Exp. Bot.">
        <title>Arabidopsis 3-deoxy-D-manno-oct-2-ulosonate-8-phosphate synthase: cDNA cloning and expression analyses.</title>
        <authorList>
            <person name="Matsuura K."/>
            <person name="Miyagawa I."/>
            <person name="Kobayashi M."/>
            <person name="Ohta D."/>
            <person name="Matoh T."/>
        </authorList>
    </citation>
    <scope>NUCLEOTIDE SEQUENCE [MRNA]</scope>
    <scope>FUNCTION</scope>
    <scope>CATALYTIC ACTIVITY</scope>
    <scope>TISSUE SPECIFICITY</scope>
</reference>
<reference key="2">
    <citation type="journal article" date="2000" name="Nature">
        <title>Sequence and analysis of chromosome 1 of the plant Arabidopsis thaliana.</title>
        <authorList>
            <person name="Theologis A."/>
            <person name="Ecker J.R."/>
            <person name="Palm C.J."/>
            <person name="Federspiel N.A."/>
            <person name="Kaul S."/>
            <person name="White O."/>
            <person name="Alonso J."/>
            <person name="Altafi H."/>
            <person name="Araujo R."/>
            <person name="Bowman C.L."/>
            <person name="Brooks S.Y."/>
            <person name="Buehler E."/>
            <person name="Chan A."/>
            <person name="Chao Q."/>
            <person name="Chen H."/>
            <person name="Cheuk R.F."/>
            <person name="Chin C.W."/>
            <person name="Chung M.K."/>
            <person name="Conn L."/>
            <person name="Conway A.B."/>
            <person name="Conway A.R."/>
            <person name="Creasy T.H."/>
            <person name="Dewar K."/>
            <person name="Dunn P."/>
            <person name="Etgu P."/>
            <person name="Feldblyum T.V."/>
            <person name="Feng J.-D."/>
            <person name="Fong B."/>
            <person name="Fujii C.Y."/>
            <person name="Gill J.E."/>
            <person name="Goldsmith A.D."/>
            <person name="Haas B."/>
            <person name="Hansen N.F."/>
            <person name="Hughes B."/>
            <person name="Huizar L."/>
            <person name="Hunter J.L."/>
            <person name="Jenkins J."/>
            <person name="Johnson-Hopson C."/>
            <person name="Khan S."/>
            <person name="Khaykin E."/>
            <person name="Kim C.J."/>
            <person name="Koo H.L."/>
            <person name="Kremenetskaia I."/>
            <person name="Kurtz D.B."/>
            <person name="Kwan A."/>
            <person name="Lam B."/>
            <person name="Langin-Hooper S."/>
            <person name="Lee A."/>
            <person name="Lee J.M."/>
            <person name="Lenz C.A."/>
            <person name="Li J.H."/>
            <person name="Li Y.-P."/>
            <person name="Lin X."/>
            <person name="Liu S.X."/>
            <person name="Liu Z.A."/>
            <person name="Luros J.S."/>
            <person name="Maiti R."/>
            <person name="Marziali A."/>
            <person name="Militscher J."/>
            <person name="Miranda M."/>
            <person name="Nguyen M."/>
            <person name="Nierman W.C."/>
            <person name="Osborne B.I."/>
            <person name="Pai G."/>
            <person name="Peterson J."/>
            <person name="Pham P.K."/>
            <person name="Rizzo M."/>
            <person name="Rooney T."/>
            <person name="Rowley D."/>
            <person name="Sakano H."/>
            <person name="Salzberg S.L."/>
            <person name="Schwartz J.R."/>
            <person name="Shinn P."/>
            <person name="Southwick A.M."/>
            <person name="Sun H."/>
            <person name="Tallon L.J."/>
            <person name="Tambunga G."/>
            <person name="Toriumi M.J."/>
            <person name="Town C.D."/>
            <person name="Utterback T."/>
            <person name="Van Aken S."/>
            <person name="Vaysberg M."/>
            <person name="Vysotskaia V.S."/>
            <person name="Walker M."/>
            <person name="Wu D."/>
            <person name="Yu G."/>
            <person name="Fraser C.M."/>
            <person name="Venter J.C."/>
            <person name="Davis R.W."/>
        </authorList>
    </citation>
    <scope>NUCLEOTIDE SEQUENCE [LARGE SCALE GENOMIC DNA]</scope>
    <source>
        <strain>cv. Columbia</strain>
    </source>
</reference>
<reference key="3">
    <citation type="journal article" date="2017" name="Plant J.">
        <title>Araport11: a complete reannotation of the Arabidopsis thaliana reference genome.</title>
        <authorList>
            <person name="Cheng C.Y."/>
            <person name="Krishnakumar V."/>
            <person name="Chan A.P."/>
            <person name="Thibaud-Nissen F."/>
            <person name="Schobel S."/>
            <person name="Town C.D."/>
        </authorList>
    </citation>
    <scope>GENOME REANNOTATION</scope>
    <source>
        <strain>cv. Columbia</strain>
    </source>
</reference>
<reference key="4">
    <citation type="journal article" date="2003" name="Science">
        <title>Empirical analysis of transcriptional activity in the Arabidopsis genome.</title>
        <authorList>
            <person name="Yamada K."/>
            <person name="Lim J."/>
            <person name="Dale J.M."/>
            <person name="Chen H."/>
            <person name="Shinn P."/>
            <person name="Palm C.J."/>
            <person name="Southwick A.M."/>
            <person name="Wu H.C."/>
            <person name="Kim C.J."/>
            <person name="Nguyen M."/>
            <person name="Pham P.K."/>
            <person name="Cheuk R.F."/>
            <person name="Karlin-Newmann G."/>
            <person name="Liu S.X."/>
            <person name="Lam B."/>
            <person name="Sakano H."/>
            <person name="Wu T."/>
            <person name="Yu G."/>
            <person name="Miranda M."/>
            <person name="Quach H.L."/>
            <person name="Tripp M."/>
            <person name="Chang C.H."/>
            <person name="Lee J.M."/>
            <person name="Toriumi M.J."/>
            <person name="Chan M.M."/>
            <person name="Tang C.C."/>
            <person name="Onodera C.S."/>
            <person name="Deng J.M."/>
            <person name="Akiyama K."/>
            <person name="Ansari Y."/>
            <person name="Arakawa T."/>
            <person name="Banh J."/>
            <person name="Banno F."/>
            <person name="Bowser L."/>
            <person name="Brooks S.Y."/>
            <person name="Carninci P."/>
            <person name="Chao Q."/>
            <person name="Choy N."/>
            <person name="Enju A."/>
            <person name="Goldsmith A.D."/>
            <person name="Gurjal M."/>
            <person name="Hansen N.F."/>
            <person name="Hayashizaki Y."/>
            <person name="Johnson-Hopson C."/>
            <person name="Hsuan V.W."/>
            <person name="Iida K."/>
            <person name="Karnes M."/>
            <person name="Khan S."/>
            <person name="Koesema E."/>
            <person name="Ishida J."/>
            <person name="Jiang P.X."/>
            <person name="Jones T."/>
            <person name="Kawai J."/>
            <person name="Kamiya A."/>
            <person name="Meyers C."/>
            <person name="Nakajima M."/>
            <person name="Narusaka M."/>
            <person name="Seki M."/>
            <person name="Sakurai T."/>
            <person name="Satou M."/>
            <person name="Tamse R."/>
            <person name="Vaysberg M."/>
            <person name="Wallender E.K."/>
            <person name="Wong C."/>
            <person name="Yamamura Y."/>
            <person name="Yuan S."/>
            <person name="Shinozaki K."/>
            <person name="Davis R.W."/>
            <person name="Theologis A."/>
            <person name="Ecker J.R."/>
        </authorList>
    </citation>
    <scope>NUCLEOTIDE SEQUENCE [LARGE SCALE MRNA]</scope>
    <source>
        <strain>cv. Columbia</strain>
    </source>
</reference>
<reference key="5">
    <citation type="journal article" date="2009" name="DNA Res.">
        <title>Analysis of multiple occurrences of alternative splicing events in Arabidopsis thaliana using novel sequenced full-length cDNAs.</title>
        <authorList>
            <person name="Iida K."/>
            <person name="Fukami-Kobayashi K."/>
            <person name="Toyoda A."/>
            <person name="Sakaki Y."/>
            <person name="Kobayashi M."/>
            <person name="Seki M."/>
            <person name="Shinozaki K."/>
        </authorList>
    </citation>
    <scope>NUCLEOTIDE SEQUENCE [LARGE SCALE MRNA]</scope>
    <source>
        <strain>cv. Columbia</strain>
    </source>
</reference>
<reference key="6">
    <citation type="journal article" date="2004" name="Biochem. J.">
        <title>Functional and biochemical characterization of a recombinant Arabidopsis thaliana 3-deoxy-D-manno-octulosonate 8-phosphate synthase.</title>
        <authorList>
            <person name="Wu J."/>
            <person name="Patel M.A."/>
            <person name="Sundaram A.K."/>
            <person name="Woodard R.W."/>
        </authorList>
    </citation>
    <scope>FUNCTION</scope>
    <scope>CATALYTIC ACTIVITY</scope>
    <scope>BIOPHYSICOCHEMICAL PROPERTIES</scope>
</reference>
<reference key="7">
    <citation type="journal article" date="2008" name="J. Exp. Bot.">
        <title>The synthesis of the rhamnogalacturonan II component 3-deoxy-D-manno-2-octulosonic acid (Kdo) is required for pollen tube growth and elongation.</title>
        <authorList>
            <person name="Delmas F."/>
            <person name="Seveno M."/>
            <person name="Northey J.G."/>
            <person name="Hernould M."/>
            <person name="Lerouge P."/>
            <person name="McCourt P."/>
            <person name="Chevalier C."/>
        </authorList>
    </citation>
    <scope>FUNCTION</scope>
</reference>
<reference key="8">
    <citation type="journal article" date="2012" name="Mol. Cell. Proteomics">
        <title>Comparative large-scale characterisation of plant vs. mammal proteins reveals similar and idiosyncratic N-alpha acetylation features.</title>
        <authorList>
            <person name="Bienvenut W.V."/>
            <person name="Sumpton D."/>
            <person name="Martinez A."/>
            <person name="Lilla S."/>
            <person name="Espagne C."/>
            <person name="Meinnel T."/>
            <person name="Giglione C."/>
        </authorList>
    </citation>
    <scope>ACETYLATION [LARGE SCALE ANALYSIS] AT ALA-2</scope>
    <scope>CLEAVAGE OF INITIATOR METHIONINE [LARGE SCALE ANALYSIS]</scope>
    <scope>IDENTIFICATION BY MASS SPECTROMETRY [LARGE SCALE ANALYSIS]</scope>
</reference>
<protein>
    <recommendedName>
        <fullName>2-dehydro-3-deoxyphosphooctonate aldolase 1</fullName>
        <ecNumber evidence="2 3">2.5.1.55</ecNumber>
    </recommendedName>
    <alternativeName>
        <fullName>3-deoxy-D-manno-octulosonic acid 8-phosphate synthase</fullName>
    </alternativeName>
    <alternativeName>
        <fullName>KDO-8-phosphate synthase 1</fullName>
        <shortName>AtkdsA1</shortName>
        <shortName>KDO 8-P synthase</shortName>
        <shortName>KDOPS</shortName>
    </alternativeName>
    <alternativeName>
        <fullName>Phospho-2-dehydro-3-deoxyoctonate aldolase</fullName>
    </alternativeName>
</protein>
<feature type="initiator methionine" description="Removed" evidence="6">
    <location>
        <position position="1"/>
    </location>
</feature>
<feature type="chain" id="PRO_0000187179" description="2-dehydro-3-deoxyphosphooctonate aldolase 1">
    <location>
        <begin position="2"/>
        <end position="290"/>
    </location>
</feature>
<feature type="modified residue" description="N-acetylalanine" evidence="6">
    <location>
        <position position="2"/>
    </location>
</feature>
<feature type="sequence conflict" description="In Ref. 4; AAM47465." evidence="5" ref="4">
    <original>A</original>
    <variation>T</variation>
    <location>
        <position position="2"/>
    </location>
</feature>
<feature type="sequence conflict" description="In Ref. 1; BAB41014." evidence="5" ref="1">
    <original>F</original>
    <variation>L</variation>
    <location>
        <position position="140"/>
    </location>
</feature>